<accession>B5FI63</accession>
<proteinExistence type="inferred from homology"/>
<keyword id="KW-0963">Cytoplasm</keyword>
<keyword id="KW-0238">DNA-binding</keyword>
<keyword id="KW-0677">Repeat</keyword>
<keyword id="KW-0678">Repressor</keyword>
<keyword id="KW-0804">Transcription</keyword>
<keyword id="KW-0805">Transcription regulation</keyword>
<protein>
    <recommendedName>
        <fullName>Transcriptional regulator MraZ</fullName>
    </recommendedName>
</protein>
<gene>
    <name evidence="1" type="primary">mraZ</name>
    <name type="ordered locus">SeD_A0128</name>
</gene>
<reference key="1">
    <citation type="journal article" date="2011" name="J. Bacteriol.">
        <title>Comparative genomics of 28 Salmonella enterica isolates: evidence for CRISPR-mediated adaptive sublineage evolution.</title>
        <authorList>
            <person name="Fricke W.F."/>
            <person name="Mammel M.K."/>
            <person name="McDermott P.F."/>
            <person name="Tartera C."/>
            <person name="White D.G."/>
            <person name="Leclerc J.E."/>
            <person name="Ravel J."/>
            <person name="Cebula T.A."/>
        </authorList>
    </citation>
    <scope>NUCLEOTIDE SEQUENCE [LARGE SCALE GENOMIC DNA]</scope>
    <source>
        <strain>CT_02021853</strain>
    </source>
</reference>
<feature type="chain" id="PRO_1000191327" description="Transcriptional regulator MraZ">
    <location>
        <begin position="1"/>
        <end position="152"/>
    </location>
</feature>
<feature type="domain" description="SpoVT-AbrB 1" evidence="2">
    <location>
        <begin position="5"/>
        <end position="52"/>
    </location>
</feature>
<feature type="domain" description="SpoVT-AbrB 2" evidence="2">
    <location>
        <begin position="81"/>
        <end position="124"/>
    </location>
</feature>
<sequence>MFRGATLVNLDSKGRLTVPTRYREQLIESATGQMVCTIDIHHPCLLLYPLPEWEIIEQKLSRLSSMNPVERRVQRLLLGHASECQMDGAGRLLIAPVLRQHAGLTKEVMLVGQFNKFELWDETTWYQQVKEDIDAEQSATETLSERLQDLSL</sequence>
<evidence type="ECO:0000255" key="1">
    <source>
        <dbReference type="HAMAP-Rule" id="MF_01008"/>
    </source>
</evidence>
<evidence type="ECO:0000255" key="2">
    <source>
        <dbReference type="PROSITE-ProRule" id="PRU01076"/>
    </source>
</evidence>
<dbReference type="EMBL" id="CP001144">
    <property type="protein sequence ID" value="ACH75463.1"/>
    <property type="molecule type" value="Genomic_DNA"/>
</dbReference>
<dbReference type="RefSeq" id="WP_000488294.1">
    <property type="nucleotide sequence ID" value="NC_011205.1"/>
</dbReference>
<dbReference type="SMR" id="B5FI63"/>
<dbReference type="KEGG" id="sed:SeD_A0128"/>
<dbReference type="HOGENOM" id="CLU_107907_2_0_6"/>
<dbReference type="Proteomes" id="UP000008322">
    <property type="component" value="Chromosome"/>
</dbReference>
<dbReference type="GO" id="GO:0005737">
    <property type="term" value="C:cytoplasm"/>
    <property type="evidence" value="ECO:0007669"/>
    <property type="project" value="UniProtKB-UniRule"/>
</dbReference>
<dbReference type="GO" id="GO:0009295">
    <property type="term" value="C:nucleoid"/>
    <property type="evidence" value="ECO:0007669"/>
    <property type="project" value="UniProtKB-SubCell"/>
</dbReference>
<dbReference type="GO" id="GO:0003700">
    <property type="term" value="F:DNA-binding transcription factor activity"/>
    <property type="evidence" value="ECO:0007669"/>
    <property type="project" value="UniProtKB-UniRule"/>
</dbReference>
<dbReference type="GO" id="GO:0000976">
    <property type="term" value="F:transcription cis-regulatory region binding"/>
    <property type="evidence" value="ECO:0007669"/>
    <property type="project" value="TreeGrafter"/>
</dbReference>
<dbReference type="GO" id="GO:2000143">
    <property type="term" value="P:negative regulation of DNA-templated transcription initiation"/>
    <property type="evidence" value="ECO:0007669"/>
    <property type="project" value="TreeGrafter"/>
</dbReference>
<dbReference type="CDD" id="cd16321">
    <property type="entry name" value="MraZ_C"/>
    <property type="match status" value="1"/>
</dbReference>
<dbReference type="CDD" id="cd16320">
    <property type="entry name" value="MraZ_N"/>
    <property type="match status" value="1"/>
</dbReference>
<dbReference type="FunFam" id="3.40.1550.20:FF:000001">
    <property type="entry name" value="Transcriptional regulator MraZ"/>
    <property type="match status" value="1"/>
</dbReference>
<dbReference type="Gene3D" id="3.40.1550.20">
    <property type="entry name" value="Transcriptional regulator MraZ domain"/>
    <property type="match status" value="1"/>
</dbReference>
<dbReference type="HAMAP" id="MF_01008">
    <property type="entry name" value="MraZ"/>
    <property type="match status" value="1"/>
</dbReference>
<dbReference type="InterPro" id="IPR003444">
    <property type="entry name" value="MraZ"/>
</dbReference>
<dbReference type="InterPro" id="IPR035644">
    <property type="entry name" value="MraZ_C"/>
</dbReference>
<dbReference type="InterPro" id="IPR020603">
    <property type="entry name" value="MraZ_dom"/>
</dbReference>
<dbReference type="InterPro" id="IPR035642">
    <property type="entry name" value="MraZ_N"/>
</dbReference>
<dbReference type="InterPro" id="IPR038619">
    <property type="entry name" value="MraZ_sf"/>
</dbReference>
<dbReference type="InterPro" id="IPR007159">
    <property type="entry name" value="SpoVT-AbrB_dom"/>
</dbReference>
<dbReference type="InterPro" id="IPR037914">
    <property type="entry name" value="SpoVT-AbrB_sf"/>
</dbReference>
<dbReference type="NCBIfam" id="TIGR00242">
    <property type="entry name" value="division/cell wall cluster transcriptional repressor MraZ"/>
    <property type="match status" value="1"/>
</dbReference>
<dbReference type="PANTHER" id="PTHR34701">
    <property type="entry name" value="TRANSCRIPTIONAL REGULATOR MRAZ"/>
    <property type="match status" value="1"/>
</dbReference>
<dbReference type="PANTHER" id="PTHR34701:SF1">
    <property type="entry name" value="TRANSCRIPTIONAL REGULATOR MRAZ"/>
    <property type="match status" value="1"/>
</dbReference>
<dbReference type="Pfam" id="PF02381">
    <property type="entry name" value="MraZ"/>
    <property type="match status" value="2"/>
</dbReference>
<dbReference type="SUPFAM" id="SSF89447">
    <property type="entry name" value="AbrB/MazE/MraZ-like"/>
    <property type="match status" value="1"/>
</dbReference>
<dbReference type="PROSITE" id="PS51740">
    <property type="entry name" value="SPOVT_ABRB"/>
    <property type="match status" value="2"/>
</dbReference>
<organism>
    <name type="scientific">Salmonella dublin (strain CT_02021853)</name>
    <dbReference type="NCBI Taxonomy" id="439851"/>
    <lineage>
        <taxon>Bacteria</taxon>
        <taxon>Pseudomonadati</taxon>
        <taxon>Pseudomonadota</taxon>
        <taxon>Gammaproteobacteria</taxon>
        <taxon>Enterobacterales</taxon>
        <taxon>Enterobacteriaceae</taxon>
        <taxon>Salmonella</taxon>
    </lineage>
</organism>
<comment type="function">
    <text evidence="1">Negatively regulates its own expression and that of the subsequent genes in the proximal part of the division and cell wall (dcw) gene cluster. Acts by binding directly to DNA. May also regulate the expression of genes outside the dcw cluster.</text>
</comment>
<comment type="subunit">
    <text evidence="1">Forms oligomers.</text>
</comment>
<comment type="subcellular location">
    <subcellularLocation>
        <location evidence="1">Cytoplasm</location>
        <location evidence="1">Nucleoid</location>
    </subcellularLocation>
</comment>
<comment type="similarity">
    <text evidence="1">Belongs to the MraZ family.</text>
</comment>
<name>MRAZ_SALDC</name>